<organism>
    <name type="scientific">Aeromonas salmonicida (strain A449)</name>
    <dbReference type="NCBI Taxonomy" id="382245"/>
    <lineage>
        <taxon>Bacteria</taxon>
        <taxon>Pseudomonadati</taxon>
        <taxon>Pseudomonadota</taxon>
        <taxon>Gammaproteobacteria</taxon>
        <taxon>Aeromonadales</taxon>
        <taxon>Aeromonadaceae</taxon>
        <taxon>Aeromonas</taxon>
    </lineage>
</organism>
<sequence>MENIKMEMIYFAAAIMLGMAAVGAAIGISLLGGKFLEGAARQPDLMPILRTNFFIVMGLVDAIPMIVVGMALYLIFGVAA</sequence>
<gene>
    <name evidence="1" type="primary">atpE</name>
    <name type="ordered locus">ASA_4355</name>
</gene>
<proteinExistence type="inferred from homology"/>
<keyword id="KW-0066">ATP synthesis</keyword>
<keyword id="KW-0997">Cell inner membrane</keyword>
<keyword id="KW-1003">Cell membrane</keyword>
<keyword id="KW-0138">CF(0)</keyword>
<keyword id="KW-0375">Hydrogen ion transport</keyword>
<keyword id="KW-0406">Ion transport</keyword>
<keyword id="KW-0446">Lipid-binding</keyword>
<keyword id="KW-0472">Membrane</keyword>
<keyword id="KW-0812">Transmembrane</keyword>
<keyword id="KW-1133">Transmembrane helix</keyword>
<keyword id="KW-0813">Transport</keyword>
<name>ATPL_AERS4</name>
<accession>A4STP8</accession>
<reference key="1">
    <citation type="journal article" date="2008" name="BMC Genomics">
        <title>The genome of Aeromonas salmonicida subsp. salmonicida A449: insights into the evolution of a fish pathogen.</title>
        <authorList>
            <person name="Reith M.E."/>
            <person name="Singh R.K."/>
            <person name="Curtis B."/>
            <person name="Boyd J.M."/>
            <person name="Bouevitch A."/>
            <person name="Kimball J."/>
            <person name="Munholland J."/>
            <person name="Murphy C."/>
            <person name="Sarty D."/>
            <person name="Williams J."/>
            <person name="Nash J.H."/>
            <person name="Johnson S.C."/>
            <person name="Brown L.L."/>
        </authorList>
    </citation>
    <scope>NUCLEOTIDE SEQUENCE [LARGE SCALE GENOMIC DNA]</scope>
    <source>
        <strain>A449</strain>
    </source>
</reference>
<feature type="chain" id="PRO_1000184315" description="ATP synthase subunit c">
    <location>
        <begin position="1"/>
        <end position="80"/>
    </location>
</feature>
<feature type="transmembrane region" description="Helical" evidence="1">
    <location>
        <begin position="8"/>
        <end position="28"/>
    </location>
</feature>
<feature type="transmembrane region" description="Helical" evidence="1">
    <location>
        <begin position="55"/>
        <end position="75"/>
    </location>
</feature>
<feature type="site" description="Reversibly protonated during proton transport" evidence="1">
    <location>
        <position position="61"/>
    </location>
</feature>
<dbReference type="EMBL" id="CP000644">
    <property type="protein sequence ID" value="ABO92270.1"/>
    <property type="molecule type" value="Genomic_DNA"/>
</dbReference>
<dbReference type="RefSeq" id="WP_005319616.1">
    <property type="nucleotide sequence ID" value="NC_009348.1"/>
</dbReference>
<dbReference type="SMR" id="A4STP8"/>
<dbReference type="STRING" id="29491.GCA_000820065_00586"/>
<dbReference type="GeneID" id="97138881"/>
<dbReference type="KEGG" id="asa:ASA_4355"/>
<dbReference type="eggNOG" id="ENOG5032S3K">
    <property type="taxonomic scope" value="Bacteria"/>
</dbReference>
<dbReference type="HOGENOM" id="CLU_148047_1_0_6"/>
<dbReference type="Proteomes" id="UP000000225">
    <property type="component" value="Chromosome"/>
</dbReference>
<dbReference type="GO" id="GO:0005886">
    <property type="term" value="C:plasma membrane"/>
    <property type="evidence" value="ECO:0007669"/>
    <property type="project" value="UniProtKB-SubCell"/>
</dbReference>
<dbReference type="GO" id="GO:0045259">
    <property type="term" value="C:proton-transporting ATP synthase complex"/>
    <property type="evidence" value="ECO:0007669"/>
    <property type="project" value="UniProtKB-KW"/>
</dbReference>
<dbReference type="GO" id="GO:0033177">
    <property type="term" value="C:proton-transporting two-sector ATPase complex, proton-transporting domain"/>
    <property type="evidence" value="ECO:0007669"/>
    <property type="project" value="InterPro"/>
</dbReference>
<dbReference type="GO" id="GO:0008289">
    <property type="term" value="F:lipid binding"/>
    <property type="evidence" value="ECO:0007669"/>
    <property type="project" value="UniProtKB-KW"/>
</dbReference>
<dbReference type="GO" id="GO:0046933">
    <property type="term" value="F:proton-transporting ATP synthase activity, rotational mechanism"/>
    <property type="evidence" value="ECO:0007669"/>
    <property type="project" value="UniProtKB-UniRule"/>
</dbReference>
<dbReference type="CDD" id="cd18185">
    <property type="entry name" value="ATP-synt_Fo_c_ATPE"/>
    <property type="match status" value="1"/>
</dbReference>
<dbReference type="FunFam" id="1.20.20.10:FF:000002">
    <property type="entry name" value="ATP synthase subunit c"/>
    <property type="match status" value="1"/>
</dbReference>
<dbReference type="Gene3D" id="1.20.20.10">
    <property type="entry name" value="F1F0 ATP synthase subunit C"/>
    <property type="match status" value="1"/>
</dbReference>
<dbReference type="HAMAP" id="MF_01396">
    <property type="entry name" value="ATP_synth_c_bact"/>
    <property type="match status" value="1"/>
</dbReference>
<dbReference type="InterPro" id="IPR005953">
    <property type="entry name" value="ATP_synth_csu_bac/chlpt"/>
</dbReference>
<dbReference type="InterPro" id="IPR000454">
    <property type="entry name" value="ATP_synth_F0_csu"/>
</dbReference>
<dbReference type="InterPro" id="IPR020537">
    <property type="entry name" value="ATP_synth_F0_csu_DDCD_BS"/>
</dbReference>
<dbReference type="InterPro" id="IPR038662">
    <property type="entry name" value="ATP_synth_F0_csu_sf"/>
</dbReference>
<dbReference type="InterPro" id="IPR002379">
    <property type="entry name" value="ATPase_proteolipid_c-like_dom"/>
</dbReference>
<dbReference type="InterPro" id="IPR035921">
    <property type="entry name" value="F/V-ATP_Csub_sf"/>
</dbReference>
<dbReference type="NCBIfam" id="TIGR01260">
    <property type="entry name" value="ATP_synt_c"/>
    <property type="match status" value="1"/>
</dbReference>
<dbReference type="NCBIfam" id="NF005363">
    <property type="entry name" value="PRK06876.1"/>
    <property type="match status" value="1"/>
</dbReference>
<dbReference type="Pfam" id="PF00137">
    <property type="entry name" value="ATP-synt_C"/>
    <property type="match status" value="1"/>
</dbReference>
<dbReference type="PRINTS" id="PR00124">
    <property type="entry name" value="ATPASEC"/>
</dbReference>
<dbReference type="SUPFAM" id="SSF81333">
    <property type="entry name" value="F1F0 ATP synthase subunit C"/>
    <property type="match status" value="1"/>
</dbReference>
<dbReference type="PROSITE" id="PS00605">
    <property type="entry name" value="ATPASE_C"/>
    <property type="match status" value="1"/>
</dbReference>
<protein>
    <recommendedName>
        <fullName evidence="1">ATP synthase subunit c</fullName>
    </recommendedName>
    <alternativeName>
        <fullName evidence="1">ATP synthase F(0) sector subunit c</fullName>
    </alternativeName>
    <alternativeName>
        <fullName evidence="1">F-type ATPase subunit c</fullName>
        <shortName evidence="1">F-ATPase subunit c</shortName>
    </alternativeName>
    <alternativeName>
        <fullName evidence="1">Lipid-binding protein</fullName>
    </alternativeName>
</protein>
<evidence type="ECO:0000255" key="1">
    <source>
        <dbReference type="HAMAP-Rule" id="MF_01396"/>
    </source>
</evidence>
<comment type="function">
    <text evidence="1">F(1)F(0) ATP synthase produces ATP from ADP in the presence of a proton or sodium gradient. F-type ATPases consist of two structural domains, F(1) containing the extramembraneous catalytic core and F(0) containing the membrane proton channel, linked together by a central stalk and a peripheral stalk. During catalysis, ATP synthesis in the catalytic domain of F(1) is coupled via a rotary mechanism of the central stalk subunits to proton translocation.</text>
</comment>
<comment type="function">
    <text evidence="1">Key component of the F(0) channel; it plays a direct role in translocation across the membrane. A homomeric c-ring of between 10-14 subunits forms the central stalk rotor element with the F(1) delta and epsilon subunits.</text>
</comment>
<comment type="subunit">
    <text evidence="1">F-type ATPases have 2 components, F(1) - the catalytic core - and F(0) - the membrane proton channel. F(1) has five subunits: alpha(3), beta(3), gamma(1), delta(1), epsilon(1). F(0) has three main subunits: a(1), b(2) and c(10-14). The alpha and beta chains form an alternating ring which encloses part of the gamma chain. F(1) is attached to F(0) by a central stalk formed by the gamma and epsilon chains, while a peripheral stalk is formed by the delta and b chains.</text>
</comment>
<comment type="subcellular location">
    <subcellularLocation>
        <location evidence="1">Cell inner membrane</location>
        <topology evidence="1">Multi-pass membrane protein</topology>
    </subcellularLocation>
</comment>
<comment type="similarity">
    <text evidence="1">Belongs to the ATPase C chain family.</text>
</comment>